<organism evidence="2">
    <name type="scientific">Unedogemmula bisaya</name>
    <name type="common">Sea snail</name>
    <name type="synonym">Lophiotoma bisaya</name>
    <dbReference type="NCBI Taxonomy" id="746885"/>
    <lineage>
        <taxon>Eukaryota</taxon>
        <taxon>Metazoa</taxon>
        <taxon>Spiralia</taxon>
        <taxon>Lophotrochozoa</taxon>
        <taxon>Mollusca</taxon>
        <taxon>Gastropoda</taxon>
        <taxon>Caenogastropoda</taxon>
        <taxon>Neogastropoda</taxon>
        <taxon>Conoidea</taxon>
        <taxon>Turridae</taxon>
        <taxon>Unedogemmula</taxon>
    </lineage>
</organism>
<name>TU3A_UNEBI</name>
<evidence type="ECO:0000269" key="1">
    <source>
    </source>
</evidence>
<evidence type="ECO:0000303" key="2">
    <source>
    </source>
</evidence>
<evidence type="ECO:0000305" key="3"/>
<evidence type="ECO:0000305" key="4">
    <source>
    </source>
</evidence>
<keyword id="KW-0027">Amidation</keyword>
<keyword id="KW-0903">Direct protein sequencing</keyword>
<keyword id="KW-1015">Disulfide bond</keyword>
<keyword id="KW-0379">Hydroxylation</keyword>
<keyword id="KW-0528">Neurotoxin</keyword>
<keyword id="KW-0964">Secreted</keyword>
<keyword id="KW-0800">Toxin</keyword>
<protein>
    <recommendedName>
        <fullName evidence="2">Turripeptide ubi3a</fullName>
    </recommendedName>
</protein>
<sequence>DCCPCPAGAVRCRFACC</sequence>
<dbReference type="GO" id="GO:0005576">
    <property type="term" value="C:extracellular region"/>
    <property type="evidence" value="ECO:0007669"/>
    <property type="project" value="UniProtKB-SubCell"/>
</dbReference>
<dbReference type="GO" id="GO:0090729">
    <property type="term" value="F:toxin activity"/>
    <property type="evidence" value="ECO:0007669"/>
    <property type="project" value="UniProtKB-KW"/>
</dbReference>
<feature type="peptide" id="PRO_0000442850" description="Turripeptide ubi3a" evidence="1">
    <location>
        <begin position="1"/>
        <end position="17"/>
    </location>
</feature>
<feature type="modified residue" description="4-hydroxyproline" evidence="1">
    <location>
        <position position="4"/>
    </location>
</feature>
<feature type="modified residue" description="4-hydroxyproline" evidence="1">
    <location>
        <position position="6"/>
    </location>
</feature>
<feature type="modified residue" description="Cysteine amide" evidence="1">
    <location>
        <position position="17"/>
    </location>
</feature>
<feature type="disulfide bond" evidence="1">
    <location>
        <begin position="2"/>
        <end position="12"/>
    </location>
</feature>
<feature type="disulfide bond" evidence="1">
    <location>
        <begin position="3"/>
        <end position="17"/>
    </location>
</feature>
<feature type="disulfide bond" evidence="1">
    <location>
        <begin position="5"/>
        <end position="16"/>
    </location>
</feature>
<accession>C0HKK6</accession>
<reference evidence="3" key="1">
    <citation type="journal article" date="2017" name="Biochemistry">
        <title>Structure and Biological Activity of a Turripeptide from Unedogemmula bisaya Venom.</title>
        <authorList>
            <person name="Omaga C.A."/>
            <person name="Carpio L.D."/>
            <person name="Imperial J.S."/>
            <person name="Daly N.L."/>
            <person name="Gajewiak J."/>
            <person name="Flores M.S."/>
            <person name="Espino S.S."/>
            <person name="Christensen S."/>
            <person name="Filchakova O.M."/>
            <person name="Lopez-Vera E."/>
            <person name="Raghuraman S."/>
            <person name="Olivera B.M."/>
            <person name="Concepcion G.P."/>
        </authorList>
    </citation>
    <scope>STRUCTURE BY NMR OF 1-17</scope>
    <scope>PROTEIN SEQUENCE</scope>
    <scope>MASS SPECTROMETRY</scope>
    <scope>FUNCTION</scope>
    <scope>HYDROXYLATION AT PRO-4 AND PRO-6</scope>
    <scope>AMIDATION AT CYS-17</scope>
    <scope>DISULFIDE BONDS</scope>
    <scope>SUBCELLULAR LOCATION</scope>
</reference>
<proteinExistence type="evidence at protein level"/>
<comment type="function">
    <text evidence="1">Elicits excitatory activity in two subsets of the mouse dorsal root ganglion neurons; the medium diameter isolectin B4-expressing neurons and the small diameter CGRP-expressing neurons. Displays low inhibition of the human alpha-9-alpha-10 nAChR (IC(50)=10.2 uM). In vivo, intracranial injection into mice causes strong tremors and impaired locomotion for around 3 hours after administration.</text>
</comment>
<comment type="subcellular location">
    <subcellularLocation>
        <location evidence="1">Secreted</location>
    </subcellularLocation>
</comment>
<comment type="tissue specificity">
    <text evidence="4">Expressed by the venom duct.</text>
</comment>
<comment type="domain">
    <text evidence="4">The cysteine framework is III (CC-C-C-CC). Classified in the M-3 branch, since 3 residues stand between the fourth and the fifth cysteine residues. This peptide has a cysteine scaffold similar to the M superfamily of conotoxins, but it displays a disulfide pattern previously unknown in native cone snail peptides.</text>
</comment>
<comment type="mass spectrometry"/>